<comment type="function">
    <text evidence="4 5">Probable receptor for neuropeptide ligand nlp-9 that plays a role in octopamine signaling and specifically, the octapamine inhibition of aversion responses in olfactory sensory neurons (PubMed:22124329, PubMed:25009271). In AWB olfactory sensory neurons, required for the detection of preferred food sources (PubMed:25009271).</text>
</comment>
<comment type="subcellular location">
    <subcellularLocation>
        <location evidence="6">Cell membrane</location>
        <topology evidence="6">Multi-pass membrane protein</topology>
    </subcellularLocation>
</comment>
<comment type="alternative products">
    <event type="alternative splicing"/>
    <isoform>
        <id>Q09502-1</id>
        <name evidence="7">b</name>
        <sequence type="displayed"/>
    </isoform>
    <isoform>
        <id>Q09502-2</id>
        <name evidence="8">c</name>
        <sequence type="described" ref="VSP_061791"/>
    </isoform>
    <isoform>
        <id>Q09502-3</id>
        <name evidence="9">e</name>
        <sequence type="described" ref="VSP_061790"/>
    </isoform>
    <isoform>
        <id>Q09502-4</id>
        <name evidence="10">g</name>
        <sequence type="described" ref="VSP_061792"/>
    </isoform>
</comment>
<comment type="tissue specificity">
    <text evidence="4">Expressed in sensory neurons including ASER.</text>
</comment>
<comment type="disruption phenotype">
    <text evidence="4 5">Defective octopamine signaling characterized by reduced octopamine inhibition of the aversive response initiated by ASH sensory neurons when exposed to 100% 1-octanol (PubMed:22124329). RNAi-mediated knockdown results in an inability to distinguish between different food odors (PubMed:25009271).</text>
</comment>
<comment type="similarity">
    <text evidence="3">Belongs to the G-protein coupled receptor 1 family.</text>
</comment>
<feature type="chain" id="PRO_0000070228" description="Neuropeptide receptor 18" evidence="6">
    <location>
        <begin position="1"/>
        <end position="476"/>
    </location>
</feature>
<feature type="topological domain" description="Extracellular" evidence="1">
    <location>
        <begin position="1"/>
        <end position="61"/>
    </location>
</feature>
<feature type="transmembrane region" description="Helical; Name=1" evidence="1">
    <location>
        <begin position="62"/>
        <end position="82"/>
    </location>
</feature>
<feature type="topological domain" description="Cytoplasmic" evidence="1">
    <location>
        <begin position="83"/>
        <end position="102"/>
    </location>
</feature>
<feature type="transmembrane region" description="Helical; Name=2" evidence="1">
    <location>
        <begin position="103"/>
        <end position="123"/>
    </location>
</feature>
<feature type="topological domain" description="Extracellular" evidence="1">
    <location>
        <begin position="124"/>
        <end position="139"/>
    </location>
</feature>
<feature type="transmembrane region" description="Helical; Name=3" evidence="1">
    <location>
        <begin position="140"/>
        <end position="160"/>
    </location>
</feature>
<feature type="topological domain" description="Cytoplasmic" evidence="1">
    <location>
        <begin position="161"/>
        <end position="179"/>
    </location>
</feature>
<feature type="transmembrane region" description="Helical; Name=4" evidence="1">
    <location>
        <begin position="180"/>
        <end position="200"/>
    </location>
</feature>
<feature type="topological domain" description="Extracellular" evidence="1">
    <location>
        <begin position="201"/>
        <end position="236"/>
    </location>
</feature>
<feature type="transmembrane region" description="Helical; Name=5" evidence="1">
    <location>
        <begin position="237"/>
        <end position="257"/>
    </location>
</feature>
<feature type="topological domain" description="Cytoplasmic" evidence="1">
    <location>
        <begin position="258"/>
        <end position="291"/>
    </location>
</feature>
<feature type="transmembrane region" description="Helical; Name=6" evidence="1">
    <location>
        <begin position="292"/>
        <end position="312"/>
    </location>
</feature>
<feature type="topological domain" description="Extracellular" evidence="1">
    <location>
        <begin position="313"/>
        <end position="334"/>
    </location>
</feature>
<feature type="transmembrane region" description="Helical; Name=7" evidence="1">
    <location>
        <begin position="335"/>
        <end position="355"/>
    </location>
</feature>
<feature type="topological domain" description="Cytoplasmic" evidence="1">
    <location>
        <begin position="356"/>
        <end position="476"/>
    </location>
</feature>
<feature type="glycosylation site" description="N-linked (GlcNAc...) asparagine" evidence="2">
    <location>
        <position position="43"/>
    </location>
</feature>
<feature type="glycosylation site" description="N-linked (GlcNAc...) asparagine" evidence="1">
    <location>
        <position position="57"/>
    </location>
</feature>
<feature type="disulfide bond" evidence="3">
    <location>
        <begin position="137"/>
        <end position="228"/>
    </location>
</feature>
<feature type="splice variant" id="VSP_061790" description="In isoform e." evidence="6">
    <original>MSSFYNEAKFLISDGEQMRIDTYAVGRKTMQQSDAFKGTFYEN</original>
    <variation>MEKTPKIPDMQLFLEQSFKKLHIEQSTPARENLPNREIYQIFQ</variation>
    <location>
        <begin position="1"/>
        <end position="43"/>
    </location>
</feature>
<feature type="splice variant" id="VSP_061791" description="In isoform c." evidence="6">
    <location>
        <begin position="1"/>
        <end position="29"/>
    </location>
</feature>
<feature type="splice variant" id="VSP_061792" description="In isoform g." evidence="6">
    <original>MSSFYNEAKFLISDGEQM</original>
    <variation>MEINL</variation>
    <location>
        <begin position="1"/>
        <end position="18"/>
    </location>
</feature>
<dbReference type="EMBL" id="BX284606">
    <property type="protein sequence ID" value="CCH63833.1"/>
    <property type="molecule type" value="Genomic_DNA"/>
</dbReference>
<dbReference type="EMBL" id="BX284606">
    <property type="protein sequence ID" value="CCH63835.1"/>
    <property type="molecule type" value="Genomic_DNA"/>
</dbReference>
<dbReference type="EMBL" id="BX284606">
    <property type="protein sequence ID" value="CCH63836.1"/>
    <property type="molecule type" value="Genomic_DNA"/>
</dbReference>
<dbReference type="EMBL" id="BX284606">
    <property type="protein sequence ID" value="CCH63837.1"/>
    <property type="molecule type" value="Genomic_DNA"/>
</dbReference>
<dbReference type="PIR" id="T19901">
    <property type="entry name" value="T19901"/>
</dbReference>
<dbReference type="RefSeq" id="NP_001257083.1">
    <molecule id="Q09502-4"/>
    <property type="nucleotide sequence ID" value="NM_001270154.3"/>
</dbReference>
<dbReference type="RefSeq" id="NP_001257085.1">
    <molecule id="Q09502-1"/>
    <property type="nucleotide sequence ID" value="NM_001270156.3"/>
</dbReference>
<dbReference type="RefSeq" id="NP_001257087.1">
    <property type="nucleotide sequence ID" value="NM_001270158.1"/>
</dbReference>
<dbReference type="RefSeq" id="NP_001257088.1">
    <molecule id="Q09502-3"/>
    <property type="nucleotide sequence ID" value="NM_001270159.3"/>
</dbReference>
<dbReference type="RefSeq" id="NP_001368133.1">
    <molecule id="Q09502-2"/>
    <property type="nucleotide sequence ID" value="NM_001381071.2"/>
</dbReference>
<dbReference type="SMR" id="Q09502"/>
<dbReference type="FunCoup" id="Q09502">
    <property type="interactions" value="117"/>
</dbReference>
<dbReference type="STRING" id="6239.C43C3.2f.1"/>
<dbReference type="GlyCosmos" id="Q09502">
    <property type="glycosylation" value="1 site, No reported glycans"/>
</dbReference>
<dbReference type="PaxDb" id="6239-C43C3.2f"/>
<dbReference type="EnsemblMetazoa" id="C43C3.2b.1">
    <molecule id="Q09502-1"/>
    <property type="protein sequence ID" value="C43C3.2b.1"/>
    <property type="gene ID" value="WBGene00008065"/>
</dbReference>
<dbReference type="EnsemblMetazoa" id="C43C3.2c.1">
    <molecule id="Q09502-2"/>
    <property type="protein sequence ID" value="C43C3.2c.1"/>
    <property type="gene ID" value="WBGene00008065"/>
</dbReference>
<dbReference type="EnsemblMetazoa" id="C43C3.2e.1">
    <molecule id="Q09502-3"/>
    <property type="protein sequence ID" value="C43C3.2e.1"/>
    <property type="gene ID" value="WBGene00008065"/>
</dbReference>
<dbReference type="EnsemblMetazoa" id="C43C3.2g.1">
    <molecule id="Q09502-4"/>
    <property type="protein sequence ID" value="C43C3.2g.1"/>
    <property type="gene ID" value="WBGene00008065"/>
</dbReference>
<dbReference type="GeneID" id="183408"/>
<dbReference type="KEGG" id="cel:CELE_C43C3.2"/>
<dbReference type="UCSC" id="C43C3.2">
    <molecule id="Q09502-1"/>
    <property type="organism name" value="c. elegans"/>
</dbReference>
<dbReference type="AGR" id="WB:WBGene00008065"/>
<dbReference type="CTD" id="183408"/>
<dbReference type="WormBase" id="C43C3.2b">
    <molecule id="Q09502-1"/>
    <property type="protein sequence ID" value="CE47537"/>
    <property type="gene ID" value="WBGene00008065"/>
    <property type="gene designation" value="npr-18"/>
</dbReference>
<dbReference type="WormBase" id="C43C3.2c">
    <molecule id="Q09502-2"/>
    <property type="protein sequence ID" value="CE47497"/>
    <property type="gene ID" value="WBGene00008065"/>
    <property type="gene designation" value="npr-18"/>
</dbReference>
<dbReference type="WormBase" id="C43C3.2e">
    <molecule id="Q09502-3"/>
    <property type="protein sequence ID" value="CE47594"/>
    <property type="gene ID" value="WBGene00008065"/>
    <property type="gene designation" value="npr-18"/>
</dbReference>
<dbReference type="WormBase" id="C43C3.2g">
    <molecule id="Q09502-4"/>
    <property type="protein sequence ID" value="CE47570"/>
    <property type="gene ID" value="WBGene00008065"/>
    <property type="gene designation" value="npr-18"/>
</dbReference>
<dbReference type="eggNOG" id="KOG3656">
    <property type="taxonomic scope" value="Eukaryota"/>
</dbReference>
<dbReference type="GeneTree" id="ENSGT00940000164736"/>
<dbReference type="HOGENOM" id="CLU_598842_0_0_1"/>
<dbReference type="InParanoid" id="Q09502"/>
<dbReference type="OrthoDB" id="6076970at2759"/>
<dbReference type="PhylomeDB" id="Q09502"/>
<dbReference type="Reactome" id="R-CEL-202040">
    <property type="pathway name" value="G-protein activation"/>
</dbReference>
<dbReference type="Reactome" id="R-CEL-391908">
    <property type="pathway name" value="Prostanoid ligand receptors"/>
</dbReference>
<dbReference type="Reactome" id="R-CEL-416476">
    <property type="pathway name" value="G alpha (q) signalling events"/>
</dbReference>
<dbReference type="Reactome" id="R-CEL-418594">
    <property type="pathway name" value="G alpha (i) signalling events"/>
</dbReference>
<dbReference type="Reactome" id="R-CEL-5620922">
    <property type="pathway name" value="BBSome-mediated cargo-targeting to cilium"/>
</dbReference>
<dbReference type="PRO" id="PR:Q09502"/>
<dbReference type="Proteomes" id="UP000001940">
    <property type="component" value="Chromosome X"/>
</dbReference>
<dbReference type="Bgee" id="WBGene00008065">
    <property type="expression patterns" value="Expressed in pharyngeal muscle cell (C elegans) and 2 other cell types or tissues"/>
</dbReference>
<dbReference type="GO" id="GO:0043005">
    <property type="term" value="C:neuron projection"/>
    <property type="evidence" value="ECO:0000318"/>
    <property type="project" value="GO_Central"/>
</dbReference>
<dbReference type="GO" id="GO:0005886">
    <property type="term" value="C:plasma membrane"/>
    <property type="evidence" value="ECO:0000318"/>
    <property type="project" value="GO_Central"/>
</dbReference>
<dbReference type="GO" id="GO:0004930">
    <property type="term" value="F:G protein-coupled receptor activity"/>
    <property type="evidence" value="ECO:0000318"/>
    <property type="project" value="GO_Central"/>
</dbReference>
<dbReference type="CDD" id="cd00637">
    <property type="entry name" value="7tm_classA_rhodopsin-like"/>
    <property type="match status" value="1"/>
</dbReference>
<dbReference type="FunFam" id="1.20.1070.10:FF:000439">
    <property type="entry name" value="Neuropeptide receptor 18"/>
    <property type="match status" value="1"/>
</dbReference>
<dbReference type="Gene3D" id="1.20.1070.10">
    <property type="entry name" value="Rhodopsin 7-helix transmembrane proteins"/>
    <property type="match status" value="1"/>
</dbReference>
<dbReference type="InterPro" id="IPR000276">
    <property type="entry name" value="GPCR_Rhodpsn"/>
</dbReference>
<dbReference type="InterPro" id="IPR017452">
    <property type="entry name" value="GPCR_Rhodpsn_7TM"/>
</dbReference>
<dbReference type="PANTHER" id="PTHR24229:SF53">
    <property type="entry name" value="NEUROPEPTIDE RECEPTOR 18"/>
    <property type="match status" value="1"/>
</dbReference>
<dbReference type="PANTHER" id="PTHR24229">
    <property type="entry name" value="NEUROPEPTIDES RECEPTOR"/>
    <property type="match status" value="1"/>
</dbReference>
<dbReference type="Pfam" id="PF00001">
    <property type="entry name" value="7tm_1"/>
    <property type="match status" value="1"/>
</dbReference>
<dbReference type="PRINTS" id="PR00237">
    <property type="entry name" value="GPCRRHODOPSN"/>
</dbReference>
<dbReference type="SUPFAM" id="SSF81321">
    <property type="entry name" value="Family A G protein-coupled receptor-like"/>
    <property type="match status" value="1"/>
</dbReference>
<dbReference type="PROSITE" id="PS00237">
    <property type="entry name" value="G_PROTEIN_RECEP_F1_1"/>
    <property type="match status" value="1"/>
</dbReference>
<dbReference type="PROSITE" id="PS50262">
    <property type="entry name" value="G_PROTEIN_RECEP_F1_2"/>
    <property type="match status" value="1"/>
</dbReference>
<sequence length="476" mass="54548">MSSFYNEAKFLISDGEQMRIDTYAVGRKTMQQSDAFKGTFYENFTLVYALPLSNHDNSSLMLIAGFYALLFMFGTCGNAAILAVVHHVKGQDPRSRHNTTLTYICILSIVDFLSMLPIPMTIIDQILGFWMFDTFACKLFRLLEHIGKIFSTFILVAFSIDRYCAVCHPLQVRVRNQRTVFVFLGIMFFVTCVMLSPILLYAHSKELVMHEKVDLDQEVITRMHLYKCVDDLGRELFVVFTLYSFVLAYLMPLLFMIYFYYEMLIRLFKQANVIKQTLVGRRSGGEEKKLTIPVGHIAIYTLAICSFHFICWTPYWISILYSLYEELYQDTKSTASPPTYAFIYFMYGVHALPYINSASNFILYGLLNRQLHNAPERKYTRNGVGGRQMSHALTTNTRPEYSELIAIPSSSCRPDSRVSAMIHNNNNNTESLPLAQNISNMTNKDSATIVPMPMSANVDGNEIYNWITPDTESVIL</sequence>
<reference key="1">
    <citation type="journal article" date="1998" name="Science">
        <title>Genome sequence of the nematode C. elegans: a platform for investigating biology.</title>
        <authorList>
            <consortium name="The C. elegans sequencing consortium"/>
        </authorList>
    </citation>
    <scope>NUCLEOTIDE SEQUENCE [LARGE SCALE GENOMIC DNA]</scope>
    <source>
        <strain>Bristol N2</strain>
    </source>
</reference>
<reference key="2">
    <citation type="journal article" date="2012" name="EMBO J.">
        <title>Monoamines and neuropeptides interact to inhibit aversive behaviour in Caenorhabditis elegans.</title>
        <authorList>
            <person name="Mills H."/>
            <person name="Wragg R."/>
            <person name="Hapiak V."/>
            <person name="Castelletto M."/>
            <person name="Zahratka J."/>
            <person name="Harris G."/>
            <person name="Summers P."/>
            <person name="Korchnak A."/>
            <person name="Law W."/>
            <person name="Bamber B."/>
            <person name="Komuniecki R."/>
        </authorList>
    </citation>
    <scope>FUNCTION</scope>
    <scope>TISSUE SPECIFICITY</scope>
    <scope>DISRUPTION PHENOTYPE</scope>
</reference>
<reference key="3">
    <citation type="journal article" date="2014" name="J. Neurosci.">
        <title>Dissecting the signaling mechanisms underlying recognition and preference of food odors.</title>
        <authorList>
            <person name="Harris G."/>
            <person name="Shen Y."/>
            <person name="Ha H."/>
            <person name="Donato A."/>
            <person name="Wallis S."/>
            <person name="Zhang X."/>
            <person name="Zhang Y."/>
        </authorList>
    </citation>
    <scope>FUNCTION</scope>
    <scope>DISRUPTION PHENOTYPE</scope>
</reference>
<protein>
    <recommendedName>
        <fullName evidence="6">Neuropeptide receptor 18</fullName>
    </recommendedName>
</protein>
<gene>
    <name evidence="7" type="primary">npr-18</name>
    <name evidence="7" type="ORF">C43C3.2</name>
</gene>
<name>NPR18_CAEEL</name>
<organism>
    <name type="scientific">Caenorhabditis elegans</name>
    <dbReference type="NCBI Taxonomy" id="6239"/>
    <lineage>
        <taxon>Eukaryota</taxon>
        <taxon>Metazoa</taxon>
        <taxon>Ecdysozoa</taxon>
        <taxon>Nematoda</taxon>
        <taxon>Chromadorea</taxon>
        <taxon>Rhabditida</taxon>
        <taxon>Rhabditina</taxon>
        <taxon>Rhabditomorpha</taxon>
        <taxon>Rhabditoidea</taxon>
        <taxon>Rhabditidae</taxon>
        <taxon>Peloderinae</taxon>
        <taxon>Caenorhabditis</taxon>
    </lineage>
</organism>
<keyword id="KW-0025">Alternative splicing</keyword>
<keyword id="KW-1003">Cell membrane</keyword>
<keyword id="KW-1015">Disulfide bond</keyword>
<keyword id="KW-0297">G-protein coupled receptor</keyword>
<keyword id="KW-0325">Glycoprotein</keyword>
<keyword id="KW-0472">Membrane</keyword>
<keyword id="KW-0675">Receptor</keyword>
<keyword id="KW-1185">Reference proteome</keyword>
<keyword id="KW-0807">Transducer</keyword>
<keyword id="KW-0812">Transmembrane</keyword>
<keyword id="KW-1133">Transmembrane helix</keyword>
<accession>Q09502</accession>
<accession>I2HAC6</accession>
<accession>I2HAC8</accession>
<accession>I2HAC9</accession>
<accession>I2HAD0</accession>
<evidence type="ECO:0000255" key="1"/>
<evidence type="ECO:0000255" key="2">
    <source>
        <dbReference type="PROSITE-ProRule" id="PRU00498"/>
    </source>
</evidence>
<evidence type="ECO:0000255" key="3">
    <source>
        <dbReference type="PROSITE-ProRule" id="PRU00521"/>
    </source>
</evidence>
<evidence type="ECO:0000269" key="4">
    <source>
    </source>
</evidence>
<evidence type="ECO:0000269" key="5">
    <source>
    </source>
</evidence>
<evidence type="ECO:0000305" key="6"/>
<evidence type="ECO:0000312" key="7">
    <source>
        <dbReference type="WormBase" id="C43C3.2b"/>
    </source>
</evidence>
<evidence type="ECO:0000312" key="8">
    <source>
        <dbReference type="WormBase" id="C43C3.2c"/>
    </source>
</evidence>
<evidence type="ECO:0000312" key="9">
    <source>
        <dbReference type="WormBase" id="C43C3.2e"/>
    </source>
</evidence>
<evidence type="ECO:0000312" key="10">
    <source>
        <dbReference type="WormBase" id="C43C3.2g"/>
    </source>
</evidence>
<proteinExistence type="evidence at transcript level"/>